<keyword id="KW-0653">Protein transport</keyword>
<keyword id="KW-1185">Reference proteome</keyword>
<keyword id="KW-0813">Transport</keyword>
<protein>
    <recommendedName>
        <fullName>Probable protein transport Sec1a</fullName>
    </recommendedName>
</protein>
<evidence type="ECO:0000250" key="1"/>
<evidence type="ECO:0000256" key="2">
    <source>
        <dbReference type="SAM" id="MobiDB-lite"/>
    </source>
</evidence>
<evidence type="ECO:0000305" key="3"/>
<feature type="chain" id="PRO_0000247481" description="Probable protein transport Sec1a">
    <location>
        <begin position="1"/>
        <end position="665"/>
    </location>
</feature>
<feature type="region of interest" description="Disordered" evidence="2">
    <location>
        <begin position="543"/>
        <end position="594"/>
    </location>
</feature>
<feature type="compositionally biased region" description="Polar residues" evidence="2">
    <location>
        <begin position="552"/>
        <end position="567"/>
    </location>
</feature>
<feature type="compositionally biased region" description="Polar residues" evidence="2">
    <location>
        <begin position="585"/>
        <end position="594"/>
    </location>
</feature>
<reference key="1">
    <citation type="journal article" date="2002" name="Nature">
        <title>Sequence and analysis of rice chromosome 4.</title>
        <authorList>
            <person name="Feng Q."/>
            <person name="Zhang Y."/>
            <person name="Hao P."/>
            <person name="Wang S."/>
            <person name="Fu G."/>
            <person name="Huang Y."/>
            <person name="Li Y."/>
            <person name="Zhu J."/>
            <person name="Liu Y."/>
            <person name="Hu X."/>
            <person name="Jia P."/>
            <person name="Zhang Y."/>
            <person name="Zhao Q."/>
            <person name="Ying K."/>
            <person name="Yu S."/>
            <person name="Tang Y."/>
            <person name="Weng Q."/>
            <person name="Zhang L."/>
            <person name="Lu Y."/>
            <person name="Mu J."/>
            <person name="Lu Y."/>
            <person name="Zhang L.S."/>
            <person name="Yu Z."/>
            <person name="Fan D."/>
            <person name="Liu X."/>
            <person name="Lu T."/>
            <person name="Li C."/>
            <person name="Wu Y."/>
            <person name="Sun T."/>
            <person name="Lei H."/>
            <person name="Li T."/>
            <person name="Hu H."/>
            <person name="Guan J."/>
            <person name="Wu M."/>
            <person name="Zhang R."/>
            <person name="Zhou B."/>
            <person name="Chen Z."/>
            <person name="Chen L."/>
            <person name="Jin Z."/>
            <person name="Wang R."/>
            <person name="Yin H."/>
            <person name="Cai Z."/>
            <person name="Ren S."/>
            <person name="Lv G."/>
            <person name="Gu W."/>
            <person name="Zhu G."/>
            <person name="Tu Y."/>
            <person name="Jia J."/>
            <person name="Zhang Y."/>
            <person name="Chen J."/>
            <person name="Kang H."/>
            <person name="Chen X."/>
            <person name="Shao C."/>
            <person name="Sun Y."/>
            <person name="Hu Q."/>
            <person name="Zhang X."/>
            <person name="Zhang W."/>
            <person name="Wang L."/>
            <person name="Ding C."/>
            <person name="Sheng H."/>
            <person name="Gu J."/>
            <person name="Chen S."/>
            <person name="Ni L."/>
            <person name="Zhu F."/>
            <person name="Chen W."/>
            <person name="Lan L."/>
            <person name="Lai Y."/>
            <person name="Cheng Z."/>
            <person name="Gu M."/>
            <person name="Jiang J."/>
            <person name="Li J."/>
            <person name="Hong G."/>
            <person name="Xue Y."/>
            <person name="Han B."/>
        </authorList>
    </citation>
    <scope>NUCLEOTIDE SEQUENCE [LARGE SCALE GENOMIC DNA]</scope>
    <source>
        <strain>cv. Nipponbare</strain>
    </source>
</reference>
<reference key="2">
    <citation type="journal article" date="2005" name="Nature">
        <title>The map-based sequence of the rice genome.</title>
        <authorList>
            <consortium name="International rice genome sequencing project (IRGSP)"/>
        </authorList>
    </citation>
    <scope>NUCLEOTIDE SEQUENCE [LARGE SCALE GENOMIC DNA]</scope>
    <source>
        <strain>cv. Nipponbare</strain>
    </source>
</reference>
<reference key="3">
    <citation type="journal article" date="2013" name="Rice">
        <title>Improvement of the Oryza sativa Nipponbare reference genome using next generation sequence and optical map data.</title>
        <authorList>
            <person name="Kawahara Y."/>
            <person name="de la Bastide M."/>
            <person name="Hamilton J.P."/>
            <person name="Kanamori H."/>
            <person name="McCombie W.R."/>
            <person name="Ouyang S."/>
            <person name="Schwartz D.C."/>
            <person name="Tanaka T."/>
            <person name="Wu J."/>
            <person name="Zhou S."/>
            <person name="Childs K.L."/>
            <person name="Davidson R.M."/>
            <person name="Lin H."/>
            <person name="Quesada-Ocampo L."/>
            <person name="Vaillancourt B."/>
            <person name="Sakai H."/>
            <person name="Lee S.S."/>
            <person name="Kim J."/>
            <person name="Numa H."/>
            <person name="Itoh T."/>
            <person name="Buell C.R."/>
            <person name="Matsumoto T."/>
        </authorList>
    </citation>
    <scope>GENOME REANNOTATION</scope>
    <source>
        <strain>cv. Nipponbare</strain>
    </source>
</reference>
<organism>
    <name type="scientific">Oryza sativa subsp. japonica</name>
    <name type="common">Rice</name>
    <dbReference type="NCBI Taxonomy" id="39947"/>
    <lineage>
        <taxon>Eukaryota</taxon>
        <taxon>Viridiplantae</taxon>
        <taxon>Streptophyta</taxon>
        <taxon>Embryophyta</taxon>
        <taxon>Tracheophyta</taxon>
        <taxon>Spermatophyta</taxon>
        <taxon>Magnoliopsida</taxon>
        <taxon>Liliopsida</taxon>
        <taxon>Poales</taxon>
        <taxon>Poaceae</taxon>
        <taxon>BOP clade</taxon>
        <taxon>Oryzoideae</taxon>
        <taxon>Oryzeae</taxon>
        <taxon>Oryzinae</taxon>
        <taxon>Oryza</taxon>
        <taxon>Oryza sativa</taxon>
    </lineage>
</organism>
<name>SEC1A_ORYSJ</name>
<sequence length="665" mass="75297">MSMDSVISSRSGADYRSFRQITRDRLLFEMLRSTKKSSKSAWKVLIMDKLTVKIMSFSCKMADVMEEGVSLVEDLYMRRQPLPLMDAIYFIQPTKENIRIFMSDMSGKIPLYKKAYVFFSSPVQRELVAQIKKDSNVRARIGALSEMNLEYFAIDSQGFTTDHDKALEELFSENAEGSLKYNSCLNMMATRIATVFASMREFPRVHYRVARTIDASTLTTLRDLAPTKLAAGVWNCLARFKAMIPEFPQTETCELLIVDRSIDQIAPIIHEWTYDAMCHDLLCMDGNKYVQQVPSKSGSGTENKEVLLEDHDPIWLELRHVHIANASERLHEKMTNFVSKNKAAQLHQARNGGDLSTKELQKMVQALPQYSDQIDKLALHVEIAGKLNSTIKEQQLKDVGQLEQDLVFGDAGTKELINFFRTHLDISRENKLRLLMVYAAINPDKTRSDKGAKLMQLAGLSADDMIAVSNMRCLCGHDSKKSSAGGFTLKFDLRKKRHGIRKERIGEESKWMLSRFYPILEELIEKLSKGELPKDEYHYLNDPSPSFRGIPSASTQTSPAHQPAQSMRSRRTGGTWARPRDSDDGYSSDSVLKHTSSNSRKLGQRLFVFVIGGATRSELCAAHKLSSKLKREIILGSSSLDDPPQFITKLKMLSTDDLTLDDLQI</sequence>
<dbReference type="EMBL" id="AL606991">
    <property type="protein sequence ID" value="CAD39977.2"/>
    <property type="molecule type" value="Genomic_DNA"/>
</dbReference>
<dbReference type="EMBL" id="AP014960">
    <property type="status" value="NOT_ANNOTATED_CDS"/>
    <property type="molecule type" value="Genomic_DNA"/>
</dbReference>
<dbReference type="RefSeq" id="XP_015633933.1">
    <property type="nucleotide sequence ID" value="XM_015778447.1"/>
</dbReference>
<dbReference type="SMR" id="Q7XWP3"/>
<dbReference type="FunCoup" id="Q7XWP3">
    <property type="interactions" value="3438"/>
</dbReference>
<dbReference type="STRING" id="39947.Q7XWP3"/>
<dbReference type="PaxDb" id="39947-Q7XWP3"/>
<dbReference type="eggNOG" id="KOG1300">
    <property type="taxonomic scope" value="Eukaryota"/>
</dbReference>
<dbReference type="InParanoid" id="Q7XWP3"/>
<dbReference type="OrthoDB" id="2228at2759"/>
<dbReference type="Proteomes" id="UP000000763">
    <property type="component" value="Chromosome 4"/>
</dbReference>
<dbReference type="Proteomes" id="UP000059680">
    <property type="component" value="Chromosome 4"/>
</dbReference>
<dbReference type="GO" id="GO:0005886">
    <property type="term" value="C:plasma membrane"/>
    <property type="evidence" value="ECO:0000318"/>
    <property type="project" value="GO_Central"/>
</dbReference>
<dbReference type="GO" id="GO:0030141">
    <property type="term" value="C:secretory granule"/>
    <property type="evidence" value="ECO:0000318"/>
    <property type="project" value="GO_Central"/>
</dbReference>
<dbReference type="GO" id="GO:0019905">
    <property type="term" value="F:syntaxin binding"/>
    <property type="evidence" value="ECO:0000318"/>
    <property type="project" value="GO_Central"/>
</dbReference>
<dbReference type="GO" id="GO:0006886">
    <property type="term" value="P:intracellular protein transport"/>
    <property type="evidence" value="ECO:0000318"/>
    <property type="project" value="GO_Central"/>
</dbReference>
<dbReference type="GO" id="GO:0006904">
    <property type="term" value="P:vesicle docking involved in exocytosis"/>
    <property type="evidence" value="ECO:0000318"/>
    <property type="project" value="GO_Central"/>
</dbReference>
<dbReference type="GO" id="GO:0016192">
    <property type="term" value="P:vesicle-mediated transport"/>
    <property type="evidence" value="ECO:0000318"/>
    <property type="project" value="GO_Central"/>
</dbReference>
<dbReference type="Gene3D" id="1.25.40.60">
    <property type="match status" value="1"/>
</dbReference>
<dbReference type="Gene3D" id="3.40.50.1910">
    <property type="match status" value="1"/>
</dbReference>
<dbReference type="Gene3D" id="3.40.50.2060">
    <property type="match status" value="1"/>
</dbReference>
<dbReference type="Gene3D" id="3.90.830.10">
    <property type="entry name" value="Syntaxin Binding Protein 1, Chain A, domain 2"/>
    <property type="match status" value="1"/>
</dbReference>
<dbReference type="InterPro" id="IPR043154">
    <property type="entry name" value="Sec-1-like_dom1"/>
</dbReference>
<dbReference type="InterPro" id="IPR043127">
    <property type="entry name" value="Sec-1-like_dom3a"/>
</dbReference>
<dbReference type="InterPro" id="IPR001619">
    <property type="entry name" value="Sec1-like"/>
</dbReference>
<dbReference type="InterPro" id="IPR027482">
    <property type="entry name" value="Sec1-like_dom2"/>
</dbReference>
<dbReference type="InterPro" id="IPR036045">
    <property type="entry name" value="Sec1-like_sf"/>
</dbReference>
<dbReference type="PANTHER" id="PTHR11679">
    <property type="entry name" value="VESICLE PROTEIN SORTING-ASSOCIATED"/>
    <property type="match status" value="1"/>
</dbReference>
<dbReference type="Pfam" id="PF00995">
    <property type="entry name" value="Sec1"/>
    <property type="match status" value="1"/>
</dbReference>
<dbReference type="PIRSF" id="PIRSF005715">
    <property type="entry name" value="VPS45_Sec1"/>
    <property type="match status" value="1"/>
</dbReference>
<dbReference type="SUPFAM" id="SSF56815">
    <property type="entry name" value="Sec1/munc18-like (SM) proteins"/>
    <property type="match status" value="1"/>
</dbReference>
<accession>Q7XWP3</accession>
<proteinExistence type="inferred from homology"/>
<gene>
    <name type="ordered locus">Os04g0252400</name>
    <name type="ordered locus">LOC_Os04g18030</name>
    <name type="ORF">OSJNBa0032B23.7</name>
</gene>
<comment type="function">
    <text evidence="1">Involved in the vesicle trafficking. Binds syntaxins (By similarity).</text>
</comment>
<comment type="similarity">
    <text evidence="3">Belongs to the STXBP/unc-18/SEC1 family.</text>
</comment>